<gene>
    <name evidence="1" type="primary">cysS</name>
    <name type="ordered locus">SSPA2032</name>
</gene>
<comment type="catalytic activity">
    <reaction evidence="1">
        <text>tRNA(Cys) + L-cysteine + ATP = L-cysteinyl-tRNA(Cys) + AMP + diphosphate</text>
        <dbReference type="Rhea" id="RHEA:17773"/>
        <dbReference type="Rhea" id="RHEA-COMP:9661"/>
        <dbReference type="Rhea" id="RHEA-COMP:9679"/>
        <dbReference type="ChEBI" id="CHEBI:30616"/>
        <dbReference type="ChEBI" id="CHEBI:33019"/>
        <dbReference type="ChEBI" id="CHEBI:35235"/>
        <dbReference type="ChEBI" id="CHEBI:78442"/>
        <dbReference type="ChEBI" id="CHEBI:78517"/>
        <dbReference type="ChEBI" id="CHEBI:456215"/>
        <dbReference type="EC" id="6.1.1.16"/>
    </reaction>
</comment>
<comment type="cofactor">
    <cofactor evidence="1">
        <name>Zn(2+)</name>
        <dbReference type="ChEBI" id="CHEBI:29105"/>
    </cofactor>
    <text evidence="1">Binds 1 zinc ion per subunit.</text>
</comment>
<comment type="subunit">
    <text evidence="1">Monomer.</text>
</comment>
<comment type="subcellular location">
    <subcellularLocation>
        <location evidence="1">Cytoplasm</location>
    </subcellularLocation>
</comment>
<comment type="similarity">
    <text evidence="1">Belongs to the class-I aminoacyl-tRNA synthetase family.</text>
</comment>
<dbReference type="EC" id="6.1.1.16" evidence="1"/>
<dbReference type="EMBL" id="FM200053">
    <property type="protein sequence ID" value="CAR60239.1"/>
    <property type="molecule type" value="Genomic_DNA"/>
</dbReference>
<dbReference type="RefSeq" id="WP_000912377.1">
    <property type="nucleotide sequence ID" value="NC_011147.1"/>
</dbReference>
<dbReference type="SMR" id="B5BCZ8"/>
<dbReference type="KEGG" id="sek:SSPA2032"/>
<dbReference type="HOGENOM" id="CLU_013528_0_1_6"/>
<dbReference type="Proteomes" id="UP000001869">
    <property type="component" value="Chromosome"/>
</dbReference>
<dbReference type="GO" id="GO:0005829">
    <property type="term" value="C:cytosol"/>
    <property type="evidence" value="ECO:0007669"/>
    <property type="project" value="TreeGrafter"/>
</dbReference>
<dbReference type="GO" id="GO:0005524">
    <property type="term" value="F:ATP binding"/>
    <property type="evidence" value="ECO:0007669"/>
    <property type="project" value="UniProtKB-UniRule"/>
</dbReference>
<dbReference type="GO" id="GO:0004817">
    <property type="term" value="F:cysteine-tRNA ligase activity"/>
    <property type="evidence" value="ECO:0007669"/>
    <property type="project" value="UniProtKB-UniRule"/>
</dbReference>
<dbReference type="GO" id="GO:0008270">
    <property type="term" value="F:zinc ion binding"/>
    <property type="evidence" value="ECO:0007669"/>
    <property type="project" value="UniProtKB-UniRule"/>
</dbReference>
<dbReference type="GO" id="GO:0006423">
    <property type="term" value="P:cysteinyl-tRNA aminoacylation"/>
    <property type="evidence" value="ECO:0007669"/>
    <property type="project" value="UniProtKB-UniRule"/>
</dbReference>
<dbReference type="CDD" id="cd07963">
    <property type="entry name" value="Anticodon_Ia_Cys"/>
    <property type="match status" value="1"/>
</dbReference>
<dbReference type="CDD" id="cd00672">
    <property type="entry name" value="CysRS_core"/>
    <property type="match status" value="1"/>
</dbReference>
<dbReference type="FunFam" id="1.20.120.1910:FF:000001">
    <property type="entry name" value="Cysteine--tRNA ligase"/>
    <property type="match status" value="1"/>
</dbReference>
<dbReference type="FunFam" id="3.40.50.620:FF:000009">
    <property type="entry name" value="Cysteine--tRNA ligase"/>
    <property type="match status" value="1"/>
</dbReference>
<dbReference type="Gene3D" id="1.20.120.1910">
    <property type="entry name" value="Cysteine-tRNA ligase, C-terminal anti-codon recognition domain"/>
    <property type="match status" value="1"/>
</dbReference>
<dbReference type="Gene3D" id="3.40.50.620">
    <property type="entry name" value="HUPs"/>
    <property type="match status" value="1"/>
</dbReference>
<dbReference type="HAMAP" id="MF_00041">
    <property type="entry name" value="Cys_tRNA_synth"/>
    <property type="match status" value="1"/>
</dbReference>
<dbReference type="InterPro" id="IPR015803">
    <property type="entry name" value="Cys-tRNA-ligase"/>
</dbReference>
<dbReference type="InterPro" id="IPR015273">
    <property type="entry name" value="Cys-tRNA-synt_Ia_DALR"/>
</dbReference>
<dbReference type="InterPro" id="IPR024909">
    <property type="entry name" value="Cys-tRNA/MSH_ligase"/>
</dbReference>
<dbReference type="InterPro" id="IPR056411">
    <property type="entry name" value="CysS_C"/>
</dbReference>
<dbReference type="InterPro" id="IPR014729">
    <property type="entry name" value="Rossmann-like_a/b/a_fold"/>
</dbReference>
<dbReference type="InterPro" id="IPR032678">
    <property type="entry name" value="tRNA-synt_1_cat_dom"/>
</dbReference>
<dbReference type="InterPro" id="IPR009080">
    <property type="entry name" value="tRNAsynth_Ia_anticodon-bd"/>
</dbReference>
<dbReference type="NCBIfam" id="TIGR00435">
    <property type="entry name" value="cysS"/>
    <property type="match status" value="1"/>
</dbReference>
<dbReference type="PANTHER" id="PTHR10890:SF3">
    <property type="entry name" value="CYSTEINE--TRNA LIGASE, CYTOPLASMIC"/>
    <property type="match status" value="1"/>
</dbReference>
<dbReference type="PANTHER" id="PTHR10890">
    <property type="entry name" value="CYSTEINYL-TRNA SYNTHETASE"/>
    <property type="match status" value="1"/>
</dbReference>
<dbReference type="Pfam" id="PF23493">
    <property type="entry name" value="CysS_C"/>
    <property type="match status" value="1"/>
</dbReference>
<dbReference type="Pfam" id="PF09190">
    <property type="entry name" value="DALR_2"/>
    <property type="match status" value="1"/>
</dbReference>
<dbReference type="Pfam" id="PF01406">
    <property type="entry name" value="tRNA-synt_1e"/>
    <property type="match status" value="1"/>
</dbReference>
<dbReference type="PRINTS" id="PR00983">
    <property type="entry name" value="TRNASYNTHCYS"/>
</dbReference>
<dbReference type="SMART" id="SM00840">
    <property type="entry name" value="DALR_2"/>
    <property type="match status" value="1"/>
</dbReference>
<dbReference type="SUPFAM" id="SSF47323">
    <property type="entry name" value="Anticodon-binding domain of a subclass of class I aminoacyl-tRNA synthetases"/>
    <property type="match status" value="1"/>
</dbReference>
<dbReference type="SUPFAM" id="SSF52374">
    <property type="entry name" value="Nucleotidylyl transferase"/>
    <property type="match status" value="1"/>
</dbReference>
<organism>
    <name type="scientific">Salmonella paratyphi A (strain AKU_12601)</name>
    <dbReference type="NCBI Taxonomy" id="554290"/>
    <lineage>
        <taxon>Bacteria</taxon>
        <taxon>Pseudomonadati</taxon>
        <taxon>Pseudomonadota</taxon>
        <taxon>Gammaproteobacteria</taxon>
        <taxon>Enterobacterales</taxon>
        <taxon>Enterobacteriaceae</taxon>
        <taxon>Salmonella</taxon>
    </lineage>
</organism>
<reference key="1">
    <citation type="journal article" date="2009" name="BMC Genomics">
        <title>Pseudogene accumulation in the evolutionary histories of Salmonella enterica serovars Paratyphi A and Typhi.</title>
        <authorList>
            <person name="Holt K.E."/>
            <person name="Thomson N.R."/>
            <person name="Wain J."/>
            <person name="Langridge G.C."/>
            <person name="Hasan R."/>
            <person name="Bhutta Z.A."/>
            <person name="Quail M.A."/>
            <person name="Norbertczak H."/>
            <person name="Walker D."/>
            <person name="Simmonds M."/>
            <person name="White B."/>
            <person name="Bason N."/>
            <person name="Mungall K."/>
            <person name="Dougan G."/>
            <person name="Parkhill J."/>
        </authorList>
    </citation>
    <scope>NUCLEOTIDE SEQUENCE [LARGE SCALE GENOMIC DNA]</scope>
    <source>
        <strain>AKU_12601</strain>
    </source>
</reference>
<sequence length="461" mass="52287">MLKIFNTLTRQKEEFKPIHAGEVGMYVCGITVYDLCHIGHGRTFVAFDVVARYLRFLGYKLKYVRNITDIDDKIIKRANENGESFVALVDRMIAEMHQDFDALNILRPDSEPRATHHIQEIIELTRTLIEKGHAYVADNGDVMFDVPTDPTYGQLSRQDLEQLQAGARVDVVDVKRNPMDFVLWKMSKEGEPSWPSPWGEGRPGWHIECSAMNCKQLGNHFDIHGGGSDLMFPHHENEIAQSTCAHDGEYVNYWMHSGMVMVDREKMSKSLGNFFTVRDVLKYYDAETVRYFLMSGHYRSQLNYSEENLKQARASLERLYTALRGTDKSAAPAGGEAFEARFVEAMNDDFNTPEAYSVLFDMAREVNRLKGEDMTAANAMASHLRKISGVLGLLEQEPDVFLQSGAQADDGEVAEIEALIQQRLDARKAKDWAAADAARDRLTEMGIILEDGPQGTTWRRK</sequence>
<feature type="chain" id="PRO_1000090871" description="Cysteine--tRNA ligase">
    <location>
        <begin position="1"/>
        <end position="461"/>
    </location>
</feature>
<feature type="short sequence motif" description="'HIGH' region">
    <location>
        <begin position="30"/>
        <end position="40"/>
    </location>
</feature>
<feature type="short sequence motif" description="'KMSKS' region">
    <location>
        <begin position="266"/>
        <end position="270"/>
    </location>
</feature>
<feature type="binding site" evidence="1">
    <location>
        <position position="28"/>
    </location>
    <ligand>
        <name>Zn(2+)</name>
        <dbReference type="ChEBI" id="CHEBI:29105"/>
    </ligand>
</feature>
<feature type="binding site" evidence="1">
    <location>
        <position position="209"/>
    </location>
    <ligand>
        <name>Zn(2+)</name>
        <dbReference type="ChEBI" id="CHEBI:29105"/>
    </ligand>
</feature>
<feature type="binding site" evidence="1">
    <location>
        <position position="234"/>
    </location>
    <ligand>
        <name>Zn(2+)</name>
        <dbReference type="ChEBI" id="CHEBI:29105"/>
    </ligand>
</feature>
<feature type="binding site" evidence="1">
    <location>
        <position position="238"/>
    </location>
    <ligand>
        <name>Zn(2+)</name>
        <dbReference type="ChEBI" id="CHEBI:29105"/>
    </ligand>
</feature>
<feature type="binding site" evidence="1">
    <location>
        <position position="269"/>
    </location>
    <ligand>
        <name>ATP</name>
        <dbReference type="ChEBI" id="CHEBI:30616"/>
    </ligand>
</feature>
<keyword id="KW-0030">Aminoacyl-tRNA synthetase</keyword>
<keyword id="KW-0067">ATP-binding</keyword>
<keyword id="KW-0963">Cytoplasm</keyword>
<keyword id="KW-0436">Ligase</keyword>
<keyword id="KW-0479">Metal-binding</keyword>
<keyword id="KW-0547">Nucleotide-binding</keyword>
<keyword id="KW-0648">Protein biosynthesis</keyword>
<keyword id="KW-0862">Zinc</keyword>
<accession>B5BCZ8</accession>
<name>SYC_SALPK</name>
<protein>
    <recommendedName>
        <fullName evidence="1">Cysteine--tRNA ligase</fullName>
        <ecNumber evidence="1">6.1.1.16</ecNumber>
    </recommendedName>
    <alternativeName>
        <fullName evidence="1">Cysteinyl-tRNA synthetase</fullName>
        <shortName evidence="1">CysRS</shortName>
    </alternativeName>
</protein>
<proteinExistence type="inferred from homology"/>
<evidence type="ECO:0000255" key="1">
    <source>
        <dbReference type="HAMAP-Rule" id="MF_00041"/>
    </source>
</evidence>